<name>NU120_CHATD</name>
<proteinExistence type="evidence at protein level"/>
<evidence type="ECO:0000250" key="1">
    <source>
        <dbReference type="UniProtKB" id="P35729"/>
    </source>
</evidence>
<evidence type="ECO:0000256" key="2">
    <source>
        <dbReference type="SAM" id="MobiDB-lite"/>
    </source>
</evidence>
<evidence type="ECO:0000303" key="3">
    <source>
    </source>
</evidence>
<evidence type="ECO:0000305" key="4">
    <source>
    </source>
</evidence>
<accession>G0S0E7</accession>
<gene>
    <name type="primary">NUP120</name>
    <name type="ORF">CTHT_0009760</name>
</gene>
<sequence length="1262" mass="141834">MAFDNFEILYKETRLNLEPASPSSVVQLRVAPTNAYGRSSLSSSSSSRPASATADDEKGYRTKNLATASSIYYRKHHSSPRGFLWRVLDNNTVLSIRVADVCRQEKVADAPLILNLRFASPLRPACVGFADHEDHDALFVYAIDQSNQLWSIILRPDHFRKRSATEGGLGDASRVYSPPGFGFKHPHRLAVVSPDQLIVTMHDGGILKFDRNKNHESHGSPWRESIYNVAGWGQSLRGLVPFQRNPTVRYEKINMELTAAASTAVTTMGHAETAFLFTICLDHRMRVWDVRTGQILYTGDILNNTKRDPQEVGKWTVDPSQNNLIRILDNGRGQCLVVTYSPVGAGEFKFWKVKANDQGSIHVTDCFPDARLMSPNPTSLDVWTLADFAIAQQPDGPELWALWKNNTSYRVNRLQIIPRNATAPFADGWKAVCVESPGPTPRASGSWNPTDSTEKWLDLIFSPGRFSKSTLETALAMYEKGLGTYKETVSRSGKGIAESICSVIGSTTTLDRSSQGGADYDQFRNTSETQWMRFWRLLLELDKQRGEALSLVFDQYDGMVWVTCADLLAAVRQCSDLERLYHNLQSPEKKNEDVAALISAGLTFVETFSDSMHQLCKAALRAELYENSALSDRERMQLFLDRAGFWVTDEDWAQVLDIVGQNYQMVTSRLYEDLFDLITATSEANSQELREPFTIFGKKVVVRAVQETVELHWQILFSQLILLVNMVDSESEEARPLHTRFDVGSVYRRLIDALRRLEHLRWMTKTELSVSPSKSRSGSSSPTLSKRGQDESYTRTALEELAGHLFGLPESNNMPLLSSITDLVLDLCAPTSTTVLNTWLIQCWLLKEGRPDLALELMPFAEQDPFSTYVQGRVFLALRDYDTAAQHFRKAAIGLSIPLKHVDRHSAGLLDDTEWNLLNSGLPNYYAHIVNLYDKQKAYSYVMEFSRLALQFAQTSNQDSASIKTEMLSRLFTASTATSHFEEAHSALLAMDDEALQKSYLRKLLERMCESGQSSELISLPFSGLQNKVDEILAEKCRATRDVLNGVPYHQILYAWRISHNDYRGAAAILLDRLEKLRRSGEGDKLGAEDGENGAGNDALDTQVTRQYLIVINALSCVAPQEAYILEDVPPPVPGKGTNDEEYSQTGSKRKLGKLNATSGEEDLDSRIEELARLLDSESAGDKKARPSSSSEEDQQLLERMQKFSTAVRQEQGQQTPRRLLRLEDLRKQYQQELDRIVAIQNNQFALTADGEDEDEDMMDIA</sequence>
<comment type="function">
    <text evidence="1">Functions as a component of the nuclear pore complex (NPC). NPC components, collectively referred to as nucleoporins (NUPs), can play the role of both NPC structural components and of docking or interaction partners for transiently associated nuclear transport factors. NUP120 is involved in nuclear poly(A)+ RNA and pre-ribosome export, in GSP1 nuclear import, in NPC assembly and distribution, as well as in nuclear envelope organization.</text>
</comment>
<comment type="subunit">
    <text evidence="1 4">Component of the nuclear pore complex (NPC). The nuclear pore complex (NPC) constitutes the exclusive means of nucleocytoplasmic transport. NPCs allow the passive diffusion of ions and small molecules and the active, nuclear transport receptor-mediated bidirectional transport of macromolecules such as proteins, RNAs, ribonucleoparticles (RNPs), and ribosomal subunits across the nuclear envelope. Due to its 8-fold rotational symmetry, all subunits are present with 8 copies or multiples thereof.</text>
</comment>
<comment type="interaction">
    <interactant intactId="EBI-16069242">
        <id>G0S0E7</id>
    </interactant>
    <interactant intactId="EBI-16069391">
        <id>G0S2G1</id>
        <label>ELYS</label>
    </interactant>
    <organismsDiffer>false</organismsDiffer>
    <experiments>6</experiments>
</comment>
<comment type="interaction">
    <interactant intactId="EBI-16069242">
        <id>G0S0E7</id>
    </interactant>
    <interactant intactId="EBI-16069276">
        <id>G0SAK3</id>
        <label>NUP145</label>
    </interactant>
    <organismsDiffer>false</organismsDiffer>
    <experiments>12</experiments>
</comment>
<comment type="interaction">
    <interactant intactId="EBI-16069242">
        <id>G0S0E7</id>
    </interactant>
    <interactant intactId="EBI-16069375">
        <id>G0S2X1</id>
        <label>NUP37</label>
    </interactant>
    <organismsDiffer>false</organismsDiffer>
    <experiments>8</experiments>
</comment>
<comment type="interaction">
    <interactant intactId="EBI-16069242">
        <id>G0S0E7</id>
    </interactant>
    <interactant intactId="EBI-16069259">
        <id>G0SDQ4</id>
        <label>NUP85</label>
    </interactant>
    <organismsDiffer>false</organismsDiffer>
    <experiments>15</experiments>
</comment>
<comment type="subcellular location">
    <subcellularLocation>
        <location evidence="1">Nucleus</location>
        <location evidence="1">Nuclear pore complex</location>
    </subcellularLocation>
    <subcellularLocation>
        <location evidence="1">Nucleus membrane</location>
        <topology evidence="1">Peripheral membrane protein</topology>
        <orientation evidence="1">Cytoplasmic side</orientation>
    </subcellularLocation>
    <subcellularLocation>
        <location evidence="1">Nucleus membrane</location>
        <topology evidence="1">Peripheral membrane protein</topology>
        <orientation evidence="1">Nucleoplasmic side</orientation>
    </subcellularLocation>
    <text evidence="1">Symmetric distribution.</text>
</comment>
<feature type="chain" id="PRO_0000433179" description="Nucleoporin NUP120">
    <location>
        <begin position="1"/>
        <end position="1262"/>
    </location>
</feature>
<feature type="region of interest" description="Disordered" evidence="2">
    <location>
        <begin position="36"/>
        <end position="58"/>
    </location>
</feature>
<feature type="region of interest" description="Disordered" evidence="2">
    <location>
        <begin position="770"/>
        <end position="791"/>
    </location>
</feature>
<feature type="region of interest" description="Disordered" evidence="2">
    <location>
        <begin position="1128"/>
        <end position="1196"/>
    </location>
</feature>
<feature type="compositionally biased region" description="Low complexity" evidence="2">
    <location>
        <begin position="770"/>
        <end position="786"/>
    </location>
</feature>
<feature type="compositionally biased region" description="Basic and acidic residues" evidence="2">
    <location>
        <begin position="1165"/>
        <end position="1185"/>
    </location>
</feature>
<dbReference type="EMBL" id="GL988037">
    <property type="protein sequence ID" value="EGS23308.1"/>
    <property type="molecule type" value="Genomic_DNA"/>
</dbReference>
<dbReference type="RefSeq" id="XP_006691499.1">
    <property type="nucleotide sequence ID" value="XM_006691436.1"/>
</dbReference>
<dbReference type="SMR" id="G0S0E7"/>
<dbReference type="DIP" id="DIP-60572N"/>
<dbReference type="IntAct" id="G0S0E7">
    <property type="interactions" value="6"/>
</dbReference>
<dbReference type="STRING" id="759272.G0S0E7"/>
<dbReference type="TCDB" id="1.I.1.1.2">
    <property type="family name" value="the nuclear pore complex (npc) family"/>
</dbReference>
<dbReference type="GeneID" id="18255014"/>
<dbReference type="KEGG" id="cthr:CTHT_0009760"/>
<dbReference type="eggNOG" id="ENOG502QQWQ">
    <property type="taxonomic scope" value="Eukaryota"/>
</dbReference>
<dbReference type="HOGENOM" id="CLU_003258_0_0_1"/>
<dbReference type="OMA" id="TLWKNNM"/>
<dbReference type="OrthoDB" id="67716at2759"/>
<dbReference type="Proteomes" id="UP000008066">
    <property type="component" value="Unassembled WGS sequence"/>
</dbReference>
<dbReference type="GO" id="GO:0031965">
    <property type="term" value="C:nuclear membrane"/>
    <property type="evidence" value="ECO:0007669"/>
    <property type="project" value="UniProtKB-SubCell"/>
</dbReference>
<dbReference type="GO" id="GO:0005643">
    <property type="term" value="C:nuclear pore"/>
    <property type="evidence" value="ECO:0007669"/>
    <property type="project" value="UniProtKB-SubCell"/>
</dbReference>
<dbReference type="GO" id="GO:0017056">
    <property type="term" value="F:structural constituent of nuclear pore"/>
    <property type="evidence" value="ECO:0007669"/>
    <property type="project" value="TreeGrafter"/>
</dbReference>
<dbReference type="GO" id="GO:0051028">
    <property type="term" value="P:mRNA transport"/>
    <property type="evidence" value="ECO:0007669"/>
    <property type="project" value="UniProtKB-KW"/>
</dbReference>
<dbReference type="GO" id="GO:0015031">
    <property type="term" value="P:protein transport"/>
    <property type="evidence" value="ECO:0007669"/>
    <property type="project" value="UniProtKB-KW"/>
</dbReference>
<dbReference type="InterPro" id="IPR056548">
    <property type="entry name" value="HEAT_Nup120"/>
</dbReference>
<dbReference type="InterPro" id="IPR021717">
    <property type="entry name" value="Nucleoporin_Nup160"/>
</dbReference>
<dbReference type="InterPro" id="IPR048884">
    <property type="entry name" value="Nup120_helical"/>
</dbReference>
<dbReference type="InterPro" id="IPR036322">
    <property type="entry name" value="WD40_repeat_dom_sf"/>
</dbReference>
<dbReference type="PANTHER" id="PTHR21286">
    <property type="entry name" value="NUCLEAR PORE COMPLEX PROTEIN NUP160"/>
    <property type="match status" value="1"/>
</dbReference>
<dbReference type="PANTHER" id="PTHR21286:SF0">
    <property type="entry name" value="NUCLEAR PORE COMPLEX PROTEIN NUP160"/>
    <property type="match status" value="1"/>
</dbReference>
<dbReference type="Pfam" id="PF11715">
    <property type="entry name" value="Beta-prop_Nup120_160"/>
    <property type="match status" value="1"/>
</dbReference>
<dbReference type="Pfam" id="PF23300">
    <property type="entry name" value="HEAT_Nup120"/>
    <property type="match status" value="1"/>
</dbReference>
<dbReference type="Pfam" id="PF21486">
    <property type="entry name" value="NUP120_helical"/>
    <property type="match status" value="1"/>
</dbReference>
<dbReference type="SUPFAM" id="SSF50978">
    <property type="entry name" value="WD40 repeat-like"/>
    <property type="match status" value="1"/>
</dbReference>
<dbReference type="PROSITE" id="PS00678">
    <property type="entry name" value="WD_REPEATS_1"/>
    <property type="match status" value="1"/>
</dbReference>
<protein>
    <recommendedName>
        <fullName evidence="3">Nucleoporin NUP120</fullName>
    </recommendedName>
    <alternativeName>
        <fullName>Nuclear pore protein NUP120</fullName>
    </alternativeName>
</protein>
<keyword id="KW-0472">Membrane</keyword>
<keyword id="KW-0509">mRNA transport</keyword>
<keyword id="KW-0906">Nuclear pore complex</keyword>
<keyword id="KW-0539">Nucleus</keyword>
<keyword id="KW-0653">Protein transport</keyword>
<keyword id="KW-1185">Reference proteome</keyword>
<keyword id="KW-0811">Translocation</keyword>
<keyword id="KW-0813">Transport</keyword>
<organism>
    <name type="scientific">Chaetomium thermophilum (strain DSM 1495 / CBS 144.50 / IMI 039719)</name>
    <name type="common">Thermochaetoides thermophila</name>
    <dbReference type="NCBI Taxonomy" id="759272"/>
    <lineage>
        <taxon>Eukaryota</taxon>
        <taxon>Fungi</taxon>
        <taxon>Dikarya</taxon>
        <taxon>Ascomycota</taxon>
        <taxon>Pezizomycotina</taxon>
        <taxon>Sordariomycetes</taxon>
        <taxon>Sordariomycetidae</taxon>
        <taxon>Sordariales</taxon>
        <taxon>Chaetomiaceae</taxon>
        <taxon>Thermochaetoides</taxon>
    </lineage>
</organism>
<reference key="1">
    <citation type="journal article" date="2011" name="Cell">
        <title>Insight into structure and assembly of the nuclear pore complex by utilizing the genome of a eukaryotic thermophile.</title>
        <authorList>
            <person name="Amlacher S."/>
            <person name="Sarges P."/>
            <person name="Flemming D."/>
            <person name="van Noort V."/>
            <person name="Kunze R."/>
            <person name="Devos D.P."/>
            <person name="Arumugam M."/>
            <person name="Bork P."/>
            <person name="Hurt E."/>
        </authorList>
    </citation>
    <scope>NUCLEOTIDE SEQUENCE [LARGE SCALE GENOMIC DNA]</scope>
    <source>
        <strain>DSM 1495 / CBS 144.50 / IMI 039719</strain>
    </source>
</reference>